<gene>
    <name evidence="15" type="primary">kasA</name>
    <name type="ordered locus">Rv2245</name>
    <name type="ORF">MTCY427.26</name>
</gene>
<proteinExistence type="evidence at protein level"/>
<accession>P9WQD9</accession>
<accession>L0T991</accession>
<accession>P63454</accession>
<accession>Q10524</accession>
<comment type="function">
    <text evidence="3 4 5 6 8 10">Part of the mycobacterial fatty acid elongation system FAS-II, which is involved in mycolic acid biosynthesis. Catalyzes the elongation of long chain acyl-ACP substrates by the addition of two carbons from malonyl-ACP to an acyl acceptor (PubMed:11600501, PubMed:12023885, PubMed:12464486, PubMed:16873379, PubMed:22017312, PubMed:24108128). Involved in the initial extension of the mycolate chain and forms monounsaturated fatty acids that averaged 40 carbons in length (PubMed:12464486).</text>
</comment>
<comment type="catalytic activity">
    <reaction evidence="18 19 22">
        <text>an ultra-long-chain mono-unsaturated fatty acyl-[ACP] + malonyl-[ACP] + H(+) = a 3-oxo-ultra-long-chain mono-unsaturated fatty acyl-[ACP] + holo-[ACP] + CO2</text>
        <dbReference type="Rhea" id="RHEA:65312"/>
        <dbReference type="Rhea" id="RHEA-COMP:9623"/>
        <dbReference type="Rhea" id="RHEA-COMP:9685"/>
        <dbReference type="Rhea" id="RHEA-COMP:16765"/>
        <dbReference type="Rhea" id="RHEA-COMP:16775"/>
        <dbReference type="ChEBI" id="CHEBI:15378"/>
        <dbReference type="ChEBI" id="CHEBI:16526"/>
        <dbReference type="ChEBI" id="CHEBI:64479"/>
        <dbReference type="ChEBI" id="CHEBI:78449"/>
        <dbReference type="ChEBI" id="CHEBI:156399"/>
        <dbReference type="ChEBI" id="CHEBI:156400"/>
        <dbReference type="EC" id="2.3.1.293"/>
    </reaction>
    <physiologicalReaction direction="left-to-right" evidence="18 19 22">
        <dbReference type="Rhea" id="RHEA:65313"/>
    </physiologicalReaction>
</comment>
<comment type="catalytic activity">
    <reaction evidence="3 4 6 8">
        <text>hexadecanoyl-[ACP] + malonyl-[ACP] + H(+) = 3-oxooctadecanoyl-[ACP] + holo-[ACP] + CO2</text>
        <dbReference type="Rhea" id="RHEA:41916"/>
        <dbReference type="Rhea" id="RHEA-COMP:9623"/>
        <dbReference type="Rhea" id="RHEA-COMP:9652"/>
        <dbReference type="Rhea" id="RHEA-COMP:9653"/>
        <dbReference type="Rhea" id="RHEA-COMP:9685"/>
        <dbReference type="ChEBI" id="CHEBI:15378"/>
        <dbReference type="ChEBI" id="CHEBI:16526"/>
        <dbReference type="ChEBI" id="CHEBI:64479"/>
        <dbReference type="ChEBI" id="CHEBI:78449"/>
        <dbReference type="ChEBI" id="CHEBI:78483"/>
        <dbReference type="ChEBI" id="CHEBI:78487"/>
    </reaction>
    <physiologicalReaction direction="left-to-right" evidence="3 4 6 8">
        <dbReference type="Rhea" id="RHEA:41917"/>
    </physiologicalReaction>
</comment>
<comment type="activity regulation">
    <text evidence="6">Phosphorylation decreases the condensation activity.</text>
</comment>
<comment type="biophysicochemical properties">
    <kinetics>
        <KM evidence="3">3.2 uM for hexadecanoyl-[ACP]</KM>
        <KM evidence="6">18.7 uM for hexadecanoyl-[ACP]</KM>
        <KM evidence="3">2.5 uM for eicosanoyl-[ACP]</KM>
        <KM evidence="3">13.5 uM for malonyl-[ACP]</KM>
        <KM evidence="6">11.8 uM for malonyl-[ACP]</KM>
        <KM evidence="8">5.8 uM for malonyl-AcpM (in the presence of hexadecanoyl-AcpM)</KM>
        <KM evidence="8">0.4 uM for hexadecanoyl-CoA (in the presence of malonyl-AcpM)</KM>
        <KM evidence="8">9 uM for malonyl-CoA (in the presence of hexadecanoyl-AcpM)</KM>
        <text evidence="3 8">kcat is 5.3 min(-1) with hexadecanoyl-[ACP] as substrate. kcat is 4.5 min(-1) with eicosanoyl-[ACP] as substrate. kcat is 4.8 min(-1) with malonyl-[ACP] as substrate (PubMed:11600501). kcat is 21 min(-1) with malonyl-CoA as substrate. kcat is 28 min(-1) with malonyl-AcpM as substrate. kcat is 5 min(-1) with hexadecanoyl-CoA as substrate (PubMed:22017312).</text>
    </kinetics>
</comment>
<comment type="pathway">
    <text evidence="4 5 18 20">Lipid metabolism; mycolic acid biosynthesis.</text>
</comment>
<comment type="subunit">
    <text evidence="7">Homodimer.</text>
</comment>
<comment type="interaction">
    <interactant intactId="EBI-15793653">
        <id>P9WQD9</id>
    </interactant>
    <interactant intactId="EBI-15793653">
        <id>P9WQD9</id>
        <label>kasA</label>
    </interactant>
    <organismsDiffer>false</organismsDiffer>
    <experiments>2</experiments>
</comment>
<comment type="subcellular location">
    <subcellularLocation>
        <location evidence="17">Cytoplasm</location>
    </subcellularLocation>
</comment>
<comment type="domain">
    <text evidence="11">Phe-404 residue probably plays a key role in the activation of the enzyme at the beginning of the catalytic cycle. A conformational change of Phe-404, possibly triggered by the substrate, is central for the activation because it switches KasA to the sufficiently reactive zwitterionic state.</text>
</comment>
<comment type="PTM">
    <text evidence="6">Phosphorylated in vitro by several Ser/Thr protein kinases (STPKs). Highly phosphorylated in vivo on threonines. Can be dephosphorylated by the Ser/Thr phosphatase PstP.</text>
</comment>
<comment type="miscellaneous">
    <text evidence="2 4 5 7 9 10 12 13 14">Identified as a drug target (PubMed:10747933, PubMed:12023885, PubMed:22076471, PubMed:27581223, PubMed:32196311, PubMed:32197094). Inhibited by isoniazid (INH), thiolactomycin (TLM) and related analogs (PubMed:10747933, PubMed:12464486, PubMed:19604480, PubMed:24108128). Highly sensitive to cerulenin (PubMed:12023885). Is the biological target of GSK3011724A, an indazole sulfonamide (PubMed:27581223). Inhibited by the indazole JSF-3285, which is a promising preclinical candidate for tuberculosis (PubMed:32197094).</text>
</comment>
<comment type="similarity">
    <text evidence="17">Belongs to the thiolase-like superfamily. Beta-ketoacyl-ACP synthases family.</text>
</comment>
<reference key="1">
    <citation type="journal article" date="1998" name="Nature">
        <title>Deciphering the biology of Mycobacterium tuberculosis from the complete genome sequence.</title>
        <authorList>
            <person name="Cole S.T."/>
            <person name="Brosch R."/>
            <person name="Parkhill J."/>
            <person name="Garnier T."/>
            <person name="Churcher C.M."/>
            <person name="Harris D.E."/>
            <person name="Gordon S.V."/>
            <person name="Eiglmeier K."/>
            <person name="Gas S."/>
            <person name="Barry C.E. III"/>
            <person name="Tekaia F."/>
            <person name="Badcock K."/>
            <person name="Basham D."/>
            <person name="Brown D."/>
            <person name="Chillingworth T."/>
            <person name="Connor R."/>
            <person name="Davies R.M."/>
            <person name="Devlin K."/>
            <person name="Feltwell T."/>
            <person name="Gentles S."/>
            <person name="Hamlin N."/>
            <person name="Holroyd S."/>
            <person name="Hornsby T."/>
            <person name="Jagels K."/>
            <person name="Krogh A."/>
            <person name="McLean J."/>
            <person name="Moule S."/>
            <person name="Murphy L.D."/>
            <person name="Oliver S."/>
            <person name="Osborne J."/>
            <person name="Quail M.A."/>
            <person name="Rajandream M.A."/>
            <person name="Rogers J."/>
            <person name="Rutter S."/>
            <person name="Seeger K."/>
            <person name="Skelton S."/>
            <person name="Squares S."/>
            <person name="Squares R."/>
            <person name="Sulston J.E."/>
            <person name="Taylor K."/>
            <person name="Whitehead S."/>
            <person name="Barrell B.G."/>
        </authorList>
    </citation>
    <scope>NUCLEOTIDE SEQUENCE [LARGE SCALE GENOMIC DNA]</scope>
    <source>
        <strain>ATCC 25618 / H37Rv</strain>
    </source>
</reference>
<reference key="2">
    <citation type="journal article" date="2000" name="J. Biol. Chem.">
        <title>Thiolactomycin and related analogues as novel anti-mycobacterial agents targeting KasA and KasB condensing enzymes in Mycobacterium tuberculosis.</title>
        <authorList>
            <person name="Kremer L."/>
            <person name="Douglas J.D."/>
            <person name="Baulard A.R."/>
            <person name="Morehouse C."/>
            <person name="Guy M.R."/>
            <person name="Alland D."/>
            <person name="Dover L.G."/>
            <person name="Lakey J.H."/>
            <person name="Jacobs W.R. Jr."/>
            <person name="Brennan P.J."/>
            <person name="Minnikin D.E."/>
            <person name="Besra G.S."/>
        </authorList>
    </citation>
    <scope>IDENTIFICATION AS A DRUG TARGET</scope>
</reference>
<reference key="3">
    <citation type="journal article" date="2001" name="J. Biol. Chem.">
        <title>Purification and biochemical characterization of the Mycobacterium tuberculosis beta-ketoacyl-acyl carrier protein synthases KasA and KasB.</title>
        <authorList>
            <person name="Schaeffer M.L."/>
            <person name="Agnihotri G."/>
            <person name="Volker C."/>
            <person name="Kallender H."/>
            <person name="Brennan P.J."/>
            <person name="Lonsdale J.T."/>
        </authorList>
    </citation>
    <scope>FUNCTION</scope>
    <scope>CATALYTIC ACTIVITY</scope>
    <scope>BIOPHYSICOCHEMICAL PROPERTIES</scope>
    <scope>PATHWAY</scope>
</reference>
<reference key="4">
    <citation type="journal article" date="2002" name="Biochem. J.">
        <title>Mycolic acid biosynthesis and enzymic characterization of the beta-ketoacyl-ACP synthase A-condensing enzyme from Mycobacterium tuberculosis.</title>
        <authorList>
            <person name="Kremer L."/>
            <person name="Dover L.G."/>
            <person name="Carrere S."/>
            <person name="Nampoothiri K.M."/>
            <person name="Lesjean S."/>
            <person name="Brown A.K."/>
            <person name="Brennan P.J."/>
            <person name="Minnikin D.E."/>
            <person name="Locht C."/>
            <person name="Besra G.S."/>
        </authorList>
    </citation>
    <scope>FUNCTION</scope>
    <scope>CATALYTIC ACTIVITY</scope>
    <scope>PATHWAY</scope>
    <scope>IDENTIFICATION AS A DRUG TARGET</scope>
    <scope>MUTAGENESIS OF CYS-171; HIS-311; LYS-340 AND HIS-345</scope>
</reference>
<reference key="5">
    <citation type="journal article" date="2002" name="Tuberculosis">
        <title>The role of KasA and KasB in the biosynthesis of meromycolic acids and isoniazid resistance in Mycobacterium tuberculosis.</title>
        <authorList>
            <person name="Slayden R.A."/>
            <person name="Barry C.E. III"/>
        </authorList>
    </citation>
    <scope>FUNCTION</scope>
    <scope>CATALYTIC ACTIVITY</scope>
    <scope>PATHWAY</scope>
    <scope>MUTAGENESIS OF ASP-66; GLY-269; GLY-312 AND PHE-413</scope>
</reference>
<reference key="6">
    <citation type="journal article" date="2006" name="J. Biol. Chem.">
        <title>The condensing activities of the Mycobacterium tuberculosis type II fatty acid synthase are differentially regulated by phosphorylation.</title>
        <authorList>
            <person name="Molle V."/>
            <person name="Brown A.K."/>
            <person name="Besra G.S."/>
            <person name="Cozzone A.J."/>
            <person name="Kremer L."/>
        </authorList>
    </citation>
    <scope>FUNCTION</scope>
    <scope>CATALYTIC ACTIVITY</scope>
    <scope>BIOPHYSICOCHEMICAL PROPERTIES</scope>
    <scope>PHOSPHORYLATION</scope>
    <scope>ACTIVITY REGULATION</scope>
</reference>
<reference key="7">
    <citation type="journal article" date="2009" name="Structure">
        <title>KasA, another brick in the mycobacterial cell wall.</title>
        <authorList>
            <person name="Swanson S."/>
            <person name="Gokulan K."/>
            <person name="Sacchettini J.C."/>
        </authorList>
    </citation>
    <scope>PATHWAY</scope>
</reference>
<reference key="8">
    <citation type="journal article" date="2011" name="Mol. Cell. Proteomics">
        <title>Proteogenomic analysis of Mycobacterium tuberculosis by high resolution mass spectrometry.</title>
        <authorList>
            <person name="Kelkar D.S."/>
            <person name="Kumar D."/>
            <person name="Kumar P."/>
            <person name="Balakrishnan L."/>
            <person name="Muthusamy B."/>
            <person name="Yadav A.K."/>
            <person name="Shrivastava P."/>
            <person name="Marimuthu A."/>
            <person name="Anand S."/>
            <person name="Sundaram H."/>
            <person name="Kingsbury R."/>
            <person name="Harsha H.C."/>
            <person name="Nair B."/>
            <person name="Prasad T.S."/>
            <person name="Chauhan D.S."/>
            <person name="Katoch K."/>
            <person name="Katoch V.M."/>
            <person name="Kumar P."/>
            <person name="Chaerkady R."/>
            <person name="Ramachandran S."/>
            <person name="Dash D."/>
            <person name="Pandey A."/>
        </authorList>
    </citation>
    <scope>IDENTIFICATION BY MASS SPECTROMETRY [LARGE SCALE ANALYSIS]</scope>
    <source>
        <strain>ATCC 25618 / H37Rv</strain>
    </source>
</reference>
<reference key="9">
    <citation type="journal article" date="2011" name="Biochemistry">
        <title>Substrate recognition by beta-ketoacyl-ACP synthases.</title>
        <authorList>
            <person name="Borgaro J.G."/>
            <person name="Chang A."/>
            <person name="Machutta C.A."/>
            <person name="Zhang X."/>
            <person name="Tonge P.J."/>
        </authorList>
    </citation>
    <scope>FUNCTION</scope>
    <scope>CATALYTIC ACTIVITY</scope>
    <scope>BIOPHYSICOCHEMICAL PROPERTIES</scope>
</reference>
<reference key="10">
    <citation type="journal article" date="2011" name="J. Comput. Aided Mol. Des.">
        <title>Molecular dynamics of Mycobacterium tuberculosis KasA: implications for inhibitor and substrate binding and consequences for drug design.</title>
        <authorList>
            <person name="Schaefer B."/>
            <person name="Kisker C."/>
            <person name="Sotriffer C.A."/>
        </authorList>
    </citation>
    <scope>IDENTIFICATION AS A DRUG TARGET</scope>
    <scope>MOLECULAR DYNAMICS SIMULATIONS</scope>
</reference>
<reference key="11">
    <citation type="journal article" date="2014" name="Biochemistry">
        <title>The protonation state of catalytic residues in the resting state of KasA revisited: detailed mechanism for the activation of KasA by its own substrate.</title>
        <authorList>
            <person name="Lee W."/>
            <person name="Engels B."/>
        </authorList>
    </citation>
    <scope>REACTION MECHANISM</scope>
    <scope>DOMAIN</scope>
    <scope>ACTIVE SITE</scope>
</reference>
<reference evidence="24 25 26 27" key="12">
    <citation type="journal article" date="2009" name="Structure">
        <title>Crystal structures of Mycobacterium tuberculosis KasA show mode of action within cell wall biosynthesis and its inhibition by thiolactomycin.</title>
        <authorList>
            <person name="Luckner S.R."/>
            <person name="Machutta C.A."/>
            <person name="Tonge P.J."/>
            <person name="Kisker C."/>
        </authorList>
    </citation>
    <scope>X-RAY CRYSTALLOGRAPHY (1.80 ANGSTROMS) OF MUTANT GLN-171 AND OF WILD-TYPE IN COMPLEX WITH THIOLACTOMYCIN INHIBITOR</scope>
    <scope>MUTAGENESIS OF CYS-171</scope>
    <scope>SUBUNIT</scope>
</reference>
<reference key="13">
    <citation type="journal article" date="2013" name="J. Biol. Chem.">
        <title>Structural basis for the recognition of mycolic acid precursors by KasA, a condensing enzyme and drug target from Mycobacterium tuberculosis.</title>
        <authorList>
            <person name="Schiebel J."/>
            <person name="Kapilashrami K."/>
            <person name="Fekete A."/>
            <person name="Bommineni G.R."/>
            <person name="Schaefer C.M."/>
            <person name="Mueller M.J."/>
            <person name="Tonge P.J."/>
            <person name="Kisker C."/>
        </authorList>
    </citation>
    <scope>X-RAY CRYSTALLOGRAPHY (2.4 ANGSTROMS) OF WILD-TYPE AND MUTANT GLN-171 IN COMPLEXES WITH SUBSTRATE ANALOGS</scope>
    <scope>FUNCTION</scope>
    <scope>CATALYTIC ACTIVITY</scope>
    <scope>REACTION MECHANISM</scope>
    <scope>ACTIVE SITE</scope>
</reference>
<reference evidence="28" key="14">
    <citation type="journal article" date="2016" name="Nat. Commun.">
        <title>Identification of KasA as the cellular target of an anti-tubercular scaffold.</title>
        <authorList>
            <person name="Abrahams K.A."/>
            <person name="Chung C.W."/>
            <person name="Ghidelli-Disse S."/>
            <person name="Rullas J."/>
            <person name="Rebollo-Lopez M.J."/>
            <person name="Gurcha S.S."/>
            <person name="Cox J.A."/>
            <person name="Mendoza A."/>
            <person name="Jimenez-Navarro E."/>
            <person name="Martinez-Martinez M.S."/>
            <person name="Neu M."/>
            <person name="Shillings A."/>
            <person name="Homes P."/>
            <person name="Argyrou A."/>
            <person name="Casanueva R."/>
            <person name="Loman N.J."/>
            <person name="Moynihan P.J."/>
            <person name="Lelievre J."/>
            <person name="Selenski C."/>
            <person name="Axtman M."/>
            <person name="Kremer L."/>
            <person name="Bantscheff M."/>
            <person name="Angulo-Barturen I."/>
            <person name="Izquierdo M.C."/>
            <person name="Cammack N.C."/>
            <person name="Drewes G."/>
            <person name="Ballell L."/>
            <person name="Barros D."/>
            <person name="Besra G.S."/>
            <person name="Bates R.H."/>
        </authorList>
    </citation>
    <scope>X-RAY CRYSTALLOGRAPHY (2.13 ANGSTROMS) OF 2-416 IN COMPLEX WITH GSK3011724A INHIBITOR</scope>
    <scope>DRUG TARGET</scope>
</reference>
<reference evidence="32 33" key="15">
    <citation type="journal article" date="2020" name="ACS Infect. Dis.">
        <title>Exploring the SAR of the beta-ketoacyl-ACP synthase inhibitor GSK3011724A and optimization around a genotoxic metabolite.</title>
        <authorList>
            <person name="Cunningham F."/>
            <person name="Esquivias J."/>
            <person name="Fernandez-Menendez R."/>
            <person name="Perez A."/>
            <person name="Guardia A."/>
            <person name="Escribano J."/>
            <person name="Rivero C."/>
            <person name="Vimal M."/>
            <person name="Cacho M."/>
            <person name="de Dios-Anton P."/>
            <person name="Martinez-Martinez M.S."/>
            <person name="Jimenez E."/>
            <person name="Huertas Valentin L."/>
            <person name="Rebollo-Lopez M.J."/>
            <person name="Lopez-Roman E.M."/>
            <person name="Sousa-Morcuende V."/>
            <person name="Rullas J."/>
            <person name="Neu M."/>
            <person name="Chung C.W."/>
            <person name="Bates R.H."/>
        </authorList>
    </citation>
    <scope>X-RAY CRYSTALLOGRAPHY (1.53 ANGSTROMS) OF 2-416 IN COMPLEXES WITH INHIBITORS</scope>
    <scope>DRUG TARGET</scope>
</reference>
<reference evidence="29 30 31" key="16">
    <citation type="journal article" date="2020" name="Cell Chem. Biol.">
        <title>A preclinical candidate targeting Mycobacterium tuberculosis KasA.</title>
        <authorList>
            <person name="Inoyama D."/>
            <person name="Awasthi D."/>
            <person name="Capodagli G.C."/>
            <person name="Tsotetsi K."/>
            <person name="Sukheja P."/>
            <person name="Zimmerman M."/>
            <person name="Li S.G."/>
            <person name="Jadhav R."/>
            <person name="Russo R."/>
            <person name="Wang X."/>
            <person name="Grady C."/>
            <person name="Richmann T."/>
            <person name="Shrestha R."/>
            <person name="Li L."/>
            <person name="Ahn Y.M."/>
            <person name="Ho Liang H.P."/>
            <person name="Mina M."/>
            <person name="Park S."/>
            <person name="Perlin D.S."/>
            <person name="Connell N."/>
            <person name="Dartois V."/>
            <person name="Alland D."/>
            <person name="Neiditch M.B."/>
            <person name="Kumar P."/>
            <person name="Freundlich J.S."/>
        </authorList>
    </citation>
    <scope>X-RAY CRYSTALLOGRAPHY (1.70 ANGSTROMS) OF 3-416 IN COMPLEXES WITH INHIBITORS</scope>
    <scope>DRUG TARGET</scope>
</reference>
<dbReference type="EC" id="2.3.1.293" evidence="18 19 22"/>
<dbReference type="EMBL" id="AL123456">
    <property type="protein sequence ID" value="CCP45025.1"/>
    <property type="molecule type" value="Genomic_DNA"/>
</dbReference>
<dbReference type="PIR" id="A70779">
    <property type="entry name" value="A70779"/>
</dbReference>
<dbReference type="RefSeq" id="NP_216761.1">
    <property type="nucleotide sequence ID" value="NC_000962.3"/>
</dbReference>
<dbReference type="RefSeq" id="WP_003411571.1">
    <property type="nucleotide sequence ID" value="NZ_NVQJ01000008.1"/>
</dbReference>
<dbReference type="PDB" id="2WGD">
    <property type="method" value="X-ray"/>
    <property type="resolution" value="2.01 A"/>
    <property type="chains" value="A=1-416"/>
</dbReference>
<dbReference type="PDB" id="2WGE">
    <property type="method" value="X-ray"/>
    <property type="resolution" value="1.80 A"/>
    <property type="chains" value="A=1-416"/>
</dbReference>
<dbReference type="PDB" id="2WGF">
    <property type="method" value="X-ray"/>
    <property type="resolution" value="2.15 A"/>
    <property type="chains" value="A/B/C/D/E/F/G/H=1-416"/>
</dbReference>
<dbReference type="PDB" id="2WGG">
    <property type="method" value="X-ray"/>
    <property type="resolution" value="2.00 A"/>
    <property type="chains" value="A/B/C/D/E/F/G/H=1-416"/>
</dbReference>
<dbReference type="PDB" id="5LD8">
    <property type="method" value="X-ray"/>
    <property type="resolution" value="2.13 A"/>
    <property type="chains" value="A/B=2-416"/>
</dbReference>
<dbReference type="PDB" id="5W2O">
    <property type="method" value="X-ray"/>
    <property type="resolution" value="1.80 A"/>
    <property type="chains" value="A=1-416"/>
</dbReference>
<dbReference type="PDB" id="5W2P">
    <property type="method" value="X-ray"/>
    <property type="resolution" value="2.00 A"/>
    <property type="chains" value="A=1-416"/>
</dbReference>
<dbReference type="PDB" id="5W2Q">
    <property type="method" value="X-ray"/>
    <property type="resolution" value="1.80 A"/>
    <property type="chains" value="A=1-416"/>
</dbReference>
<dbReference type="PDB" id="5W2S">
    <property type="method" value="X-ray"/>
    <property type="resolution" value="2.40 A"/>
    <property type="chains" value="A=1-416"/>
</dbReference>
<dbReference type="PDB" id="6P9K">
    <property type="method" value="X-ray"/>
    <property type="resolution" value="1.70 A"/>
    <property type="chains" value="A=3-416"/>
</dbReference>
<dbReference type="PDB" id="6P9L">
    <property type="method" value="X-ray"/>
    <property type="resolution" value="2.31 A"/>
    <property type="chains" value="A=3-416"/>
</dbReference>
<dbReference type="PDB" id="6P9M">
    <property type="method" value="X-ray"/>
    <property type="resolution" value="2.26 A"/>
    <property type="chains" value="A=3-416"/>
</dbReference>
<dbReference type="PDB" id="6Y2I">
    <property type="method" value="X-ray"/>
    <property type="resolution" value="1.53 A"/>
    <property type="chains" value="AAA/BBB=2-416"/>
</dbReference>
<dbReference type="PDB" id="6Y2J">
    <property type="method" value="X-ray"/>
    <property type="resolution" value="2.89 A"/>
    <property type="chains" value="AAA/BBB/CCC/DDD/EEE/FFF/GGG/HHH=2-416"/>
</dbReference>
<dbReference type="PDBsum" id="2WGD"/>
<dbReference type="PDBsum" id="2WGE"/>
<dbReference type="PDBsum" id="2WGF"/>
<dbReference type="PDBsum" id="2WGG"/>
<dbReference type="PDBsum" id="5LD8"/>
<dbReference type="PDBsum" id="5W2O"/>
<dbReference type="PDBsum" id="5W2P"/>
<dbReference type="PDBsum" id="5W2Q"/>
<dbReference type="PDBsum" id="5W2S"/>
<dbReference type="PDBsum" id="6P9K"/>
<dbReference type="PDBsum" id="6P9L"/>
<dbReference type="PDBsum" id="6P9M"/>
<dbReference type="PDBsum" id="6Y2I"/>
<dbReference type="PDBsum" id="6Y2J"/>
<dbReference type="SMR" id="P9WQD9"/>
<dbReference type="FunCoup" id="P9WQD9">
    <property type="interactions" value="428"/>
</dbReference>
<dbReference type="STRING" id="83332.Rv2245"/>
<dbReference type="BindingDB" id="P9WQD9"/>
<dbReference type="ChEMBL" id="CHEMBL4544"/>
<dbReference type="DrugBank" id="DB04302">
    <property type="generic name" value="4-Hydroxy-3,5-Dimethyl-5-(2-Methyl-Buta-1,3-Dienyl)-5h-Thiophen-2-One"/>
</dbReference>
<dbReference type="SwissLipids" id="SLP:000000962"/>
<dbReference type="PaxDb" id="83332-Rv2245"/>
<dbReference type="DNASU" id="887269"/>
<dbReference type="GeneID" id="45426225"/>
<dbReference type="GeneID" id="887269"/>
<dbReference type="KEGG" id="mtu:Rv2245"/>
<dbReference type="KEGG" id="mtv:RVBD_2245"/>
<dbReference type="TubercuList" id="Rv2245"/>
<dbReference type="eggNOG" id="COG0304">
    <property type="taxonomic scope" value="Bacteria"/>
</dbReference>
<dbReference type="InParanoid" id="P9WQD9"/>
<dbReference type="OrthoDB" id="9808669at2"/>
<dbReference type="PhylomeDB" id="P9WQD9"/>
<dbReference type="BioCyc" id="MetaCyc:G185E-6461-MONOMER"/>
<dbReference type="BRENDA" id="2.3.1.293">
    <property type="organism ID" value="3445"/>
</dbReference>
<dbReference type="BRENDA" id="2.3.1.41">
    <property type="organism ID" value="3445"/>
</dbReference>
<dbReference type="SABIO-RK" id="P9WQD9"/>
<dbReference type="UniPathway" id="UPA00915"/>
<dbReference type="EvolutionaryTrace" id="P9WQD9"/>
<dbReference type="PRO" id="PR:P9WQD9"/>
<dbReference type="Proteomes" id="UP000001584">
    <property type="component" value="Chromosome"/>
</dbReference>
<dbReference type="GO" id="GO:0005829">
    <property type="term" value="C:cytosol"/>
    <property type="evidence" value="ECO:0000314"/>
    <property type="project" value="MTBBASE"/>
</dbReference>
<dbReference type="GO" id="GO:0009274">
    <property type="term" value="C:peptidoglycan-based cell wall"/>
    <property type="evidence" value="ECO:0007005"/>
    <property type="project" value="MTBBASE"/>
</dbReference>
<dbReference type="GO" id="GO:0005886">
    <property type="term" value="C:plasma membrane"/>
    <property type="evidence" value="ECO:0007005"/>
    <property type="project" value="MTBBASE"/>
</dbReference>
<dbReference type="GO" id="GO:0004315">
    <property type="term" value="F:3-oxoacyl-[acyl-carrier-protein] synthase activity"/>
    <property type="evidence" value="ECO:0000314"/>
    <property type="project" value="MTBBASE"/>
</dbReference>
<dbReference type="GO" id="GO:0042802">
    <property type="term" value="F:identical protein binding"/>
    <property type="evidence" value="ECO:0000353"/>
    <property type="project" value="IntAct"/>
</dbReference>
<dbReference type="GO" id="GO:0006633">
    <property type="term" value="P:fatty acid biosynthetic process"/>
    <property type="evidence" value="ECO:0000318"/>
    <property type="project" value="GO_Central"/>
</dbReference>
<dbReference type="GO" id="GO:0030497">
    <property type="term" value="P:fatty acid elongation"/>
    <property type="evidence" value="ECO:0000314"/>
    <property type="project" value="MTBBASE"/>
</dbReference>
<dbReference type="GO" id="GO:0019367">
    <property type="term" value="P:fatty acid elongation, saturated fatty acid"/>
    <property type="evidence" value="ECO:0000314"/>
    <property type="project" value="MTBBASE"/>
</dbReference>
<dbReference type="CDD" id="cd00834">
    <property type="entry name" value="KAS_I_II"/>
    <property type="match status" value="1"/>
</dbReference>
<dbReference type="FunFam" id="3.40.47.10:FF:000029">
    <property type="entry name" value="3-oxoacyl-[acyl-carrier-protein] synthase 1"/>
    <property type="match status" value="1"/>
</dbReference>
<dbReference type="FunFam" id="3.40.47.10:FF:000018">
    <property type="entry name" value="3-oxoacyl-[acyl-carrier-protein] synthase 2"/>
    <property type="match status" value="1"/>
</dbReference>
<dbReference type="Gene3D" id="3.40.47.10">
    <property type="match status" value="2"/>
</dbReference>
<dbReference type="InterPro" id="IPR000794">
    <property type="entry name" value="Beta-ketoacyl_synthase"/>
</dbReference>
<dbReference type="InterPro" id="IPR014031">
    <property type="entry name" value="Ketoacyl_synth_C"/>
</dbReference>
<dbReference type="InterPro" id="IPR014030">
    <property type="entry name" value="Ketoacyl_synth_N"/>
</dbReference>
<dbReference type="InterPro" id="IPR020841">
    <property type="entry name" value="PKS_Beta-ketoAc_synthase_dom"/>
</dbReference>
<dbReference type="InterPro" id="IPR016039">
    <property type="entry name" value="Thiolase-like"/>
</dbReference>
<dbReference type="NCBIfam" id="NF005589">
    <property type="entry name" value="PRK07314.1"/>
    <property type="match status" value="1"/>
</dbReference>
<dbReference type="NCBIfam" id="NF005916">
    <property type="entry name" value="PRK07910.1"/>
    <property type="match status" value="1"/>
</dbReference>
<dbReference type="PANTHER" id="PTHR11712:SF336">
    <property type="entry name" value="3-OXOACYL-[ACYL-CARRIER-PROTEIN] SYNTHASE, MITOCHONDRIAL"/>
    <property type="match status" value="1"/>
</dbReference>
<dbReference type="PANTHER" id="PTHR11712">
    <property type="entry name" value="POLYKETIDE SYNTHASE-RELATED"/>
    <property type="match status" value="1"/>
</dbReference>
<dbReference type="Pfam" id="PF00109">
    <property type="entry name" value="ketoacyl-synt"/>
    <property type="match status" value="1"/>
</dbReference>
<dbReference type="Pfam" id="PF02801">
    <property type="entry name" value="Ketoacyl-synt_C"/>
    <property type="match status" value="1"/>
</dbReference>
<dbReference type="SMART" id="SM00825">
    <property type="entry name" value="PKS_KS"/>
    <property type="match status" value="1"/>
</dbReference>
<dbReference type="SUPFAM" id="SSF53901">
    <property type="entry name" value="Thiolase-like"/>
    <property type="match status" value="2"/>
</dbReference>
<dbReference type="PROSITE" id="PS52004">
    <property type="entry name" value="KS3_2"/>
    <property type="match status" value="1"/>
</dbReference>
<sequence>MSQPSTANGGFPSVVVTAVTATTSISPDIESTWKGLLAGESGIHALEDEFVTKWDLAVKIGGHLKDPVDSHMGRLDMRRMSYVQRMGKLLGGQLWESAGSPEVDPDRFAVVVGTGLGGAERIVESYDLMNAGGPRKVSPLAVQMIMPNGAAAVIGLQLGARAGVMTPVSACSSGSEAIAHAWRQIVMGDADVAVCGGVEGPIEALPIAAFSMMRAMSTRNDEPERASRPFDKDRDGFVFGEAGALMLIETEEHAKARGAKPLARLLGAGITSDAFHMVAPAADGVRAGRAMTRSLELAGLSPADIDHVNAHGTATPIGDAAEANAIRVAGCDQAAVYAPKSALGHSIGAVGALESVLTVLTLRDGVIPPTLNYETPDPEIDLDVVAGEPRYGDYRYAVNNSFGFGGHNVALAFGRY</sequence>
<keyword id="KW-0002">3D-structure</keyword>
<keyword id="KW-0012">Acyltransferase</keyword>
<keyword id="KW-0963">Cytoplasm</keyword>
<keyword id="KW-0275">Fatty acid biosynthesis</keyword>
<keyword id="KW-0276">Fatty acid metabolism</keyword>
<keyword id="KW-0444">Lipid biosynthesis</keyword>
<keyword id="KW-0443">Lipid metabolism</keyword>
<keyword id="KW-0597">Phosphoprotein</keyword>
<keyword id="KW-1185">Reference proteome</keyword>
<keyword id="KW-0808">Transferase</keyword>
<organism>
    <name type="scientific">Mycobacterium tuberculosis (strain ATCC 25618 / H37Rv)</name>
    <dbReference type="NCBI Taxonomy" id="83332"/>
    <lineage>
        <taxon>Bacteria</taxon>
        <taxon>Bacillati</taxon>
        <taxon>Actinomycetota</taxon>
        <taxon>Actinomycetes</taxon>
        <taxon>Mycobacteriales</taxon>
        <taxon>Mycobacteriaceae</taxon>
        <taxon>Mycobacterium</taxon>
        <taxon>Mycobacterium tuberculosis complex</taxon>
    </lineage>
</organism>
<feature type="chain" id="PRO_0000180333" description="3-oxoacyl-[acyl-carrier-protein] synthase 1">
    <location>
        <begin position="1"/>
        <end position="416"/>
    </location>
</feature>
<feature type="domain" description="Ketosynthase family 3 (KS3)" evidence="1">
    <location>
        <begin position="11"/>
        <end position="415"/>
    </location>
</feature>
<feature type="active site" description="For beta-ketoacyl synthase activity" evidence="1 21 22 23">
    <location>
        <position position="171"/>
    </location>
</feature>
<feature type="active site" description="For beta-ketoacyl synthase activity" evidence="1">
    <location>
        <position position="311"/>
    </location>
</feature>
<feature type="active site" description="For beta-ketoacyl synthase activity" evidence="1">
    <location>
        <position position="345"/>
    </location>
</feature>
<feature type="binding site" evidence="21 22">
    <location>
        <position position="311"/>
    </location>
    <ligand>
        <name>substrate</name>
    </ligand>
</feature>
<feature type="binding site" evidence="21 22">
    <location>
        <position position="345"/>
    </location>
    <ligand>
        <name>substrate</name>
    </ligand>
</feature>
<feature type="site" description="Interacts with the inhibitor thiolactomycin" evidence="7 10">
    <location>
        <position position="171"/>
    </location>
</feature>
<feature type="site" description="Interacts with the inhibitor thiolactomycin" evidence="7 10">
    <location>
        <position position="311"/>
    </location>
</feature>
<feature type="site" description="Interacts with the inhibitor thiolactomycin" evidence="7 10">
    <location>
        <position position="345"/>
    </location>
</feature>
<feature type="mutagenesis site" description="Increases resistance to isoniazid." evidence="5">
    <original>D</original>
    <variation>N</variation>
    <location>
        <position position="66"/>
    </location>
</feature>
<feature type="mutagenesis site" description="Loss of activity with hexadecanoyl-CoA." evidence="4">
    <original>C</original>
    <variation>A</variation>
    <location>
        <position position="171"/>
    </location>
</feature>
<feature type="mutagenesis site" description="Mimics structural changes caused by acyl-enzyme formation." evidence="7">
    <original>C</original>
    <variation>Q</variation>
    <location>
        <position position="171"/>
    </location>
</feature>
<feature type="mutagenesis site" description="Increases resistance to isoniazid." evidence="5">
    <original>G</original>
    <variation>S</variation>
    <location>
        <position position="269"/>
    </location>
</feature>
<feature type="mutagenesis site" description="Loss of activity with hexadecanoyl-CoA." evidence="4">
    <original>H</original>
    <variation>A</variation>
    <location>
        <position position="311"/>
    </location>
</feature>
<feature type="mutagenesis site" description="Increases resistance to isoniazid." evidence="5">
    <original>G</original>
    <variation>S</variation>
    <location>
        <position position="312"/>
    </location>
</feature>
<feature type="mutagenesis site" description="Loss of activity with hexadecanoyl-CoA." evidence="4">
    <original>K</original>
    <variation>A</variation>
    <location>
        <position position="340"/>
    </location>
</feature>
<feature type="mutagenesis site" description="Loss of activity with hexadecanoyl-CoA." evidence="4">
    <original>H</original>
    <variation>A</variation>
    <location>
        <position position="345"/>
    </location>
</feature>
<feature type="mutagenesis site" description="Increases resistance to isoniazid." evidence="5">
    <original>F</original>
    <variation>L</variation>
    <location>
        <position position="413"/>
    </location>
</feature>
<feature type="turn" evidence="35">
    <location>
        <begin position="6"/>
        <end position="9"/>
    </location>
</feature>
<feature type="strand" evidence="35">
    <location>
        <begin position="14"/>
        <end position="25"/>
    </location>
</feature>
<feature type="helix" evidence="35">
    <location>
        <begin position="29"/>
        <end position="37"/>
    </location>
</feature>
<feature type="helix" evidence="35">
    <location>
        <begin position="49"/>
        <end position="54"/>
    </location>
</feature>
<feature type="strand" evidence="35">
    <location>
        <begin position="60"/>
        <end position="62"/>
    </location>
</feature>
<feature type="helix" evidence="35">
    <location>
        <begin position="68"/>
        <end position="71"/>
    </location>
</feature>
<feature type="helix" evidence="35">
    <location>
        <begin position="74"/>
        <end position="79"/>
    </location>
</feature>
<feature type="helix" evidence="35">
    <location>
        <begin position="82"/>
        <end position="97"/>
    </location>
</feature>
<feature type="helix" evidence="35">
    <location>
        <begin position="105"/>
        <end position="107"/>
    </location>
</feature>
<feature type="strand" evidence="35">
    <location>
        <begin position="108"/>
        <end position="116"/>
    </location>
</feature>
<feature type="helix" evidence="35">
    <location>
        <begin position="120"/>
        <end position="132"/>
    </location>
</feature>
<feature type="helix" evidence="35">
    <location>
        <begin position="134"/>
        <end position="136"/>
    </location>
</feature>
<feature type="helix" evidence="35">
    <location>
        <begin position="141"/>
        <end position="145"/>
    </location>
</feature>
<feature type="helix" evidence="35">
    <location>
        <begin position="149"/>
        <end position="158"/>
    </location>
</feature>
<feature type="helix" evidence="35">
    <location>
        <begin position="170"/>
        <end position="172"/>
    </location>
</feature>
<feature type="helix" evidence="35">
    <location>
        <begin position="173"/>
        <end position="186"/>
    </location>
</feature>
<feature type="strand" evidence="35">
    <location>
        <begin position="191"/>
        <end position="198"/>
    </location>
</feature>
<feature type="helix" evidence="35">
    <location>
        <begin position="204"/>
        <end position="211"/>
    </location>
</feature>
<feature type="turn" evidence="35">
    <location>
        <begin position="212"/>
        <end position="214"/>
    </location>
</feature>
<feature type="helix" evidence="35">
    <location>
        <begin position="223"/>
        <end position="225"/>
    </location>
</feature>
<feature type="strand" evidence="35">
    <location>
        <begin position="242"/>
        <end position="250"/>
    </location>
</feature>
<feature type="helix" evidence="35">
    <location>
        <begin position="251"/>
        <end position="256"/>
    </location>
</feature>
<feature type="strand" evidence="35">
    <location>
        <begin position="262"/>
        <end position="272"/>
    </location>
</feature>
<feature type="strand" evidence="35">
    <location>
        <begin position="277"/>
        <end position="279"/>
    </location>
</feature>
<feature type="helix" evidence="35">
    <location>
        <begin position="285"/>
        <end position="298"/>
    </location>
</feature>
<feature type="helix" evidence="35">
    <location>
        <begin position="302"/>
        <end position="304"/>
    </location>
</feature>
<feature type="strand" evidence="35">
    <location>
        <begin position="307"/>
        <end position="309"/>
    </location>
</feature>
<feature type="helix" evidence="35">
    <location>
        <begin position="316"/>
        <end position="328"/>
    </location>
</feature>
<feature type="strand" evidence="35">
    <location>
        <begin position="334"/>
        <end position="337"/>
    </location>
</feature>
<feature type="helix" evidence="35">
    <location>
        <begin position="340"/>
        <end position="343"/>
    </location>
</feature>
<feature type="helix" evidence="35">
    <location>
        <begin position="347"/>
        <end position="349"/>
    </location>
</feature>
<feature type="helix" evidence="35">
    <location>
        <begin position="350"/>
        <end position="364"/>
    </location>
</feature>
<feature type="turn" evidence="34">
    <location>
        <begin position="378"/>
        <end position="380"/>
    </location>
</feature>
<feature type="strand" evidence="35">
    <location>
        <begin position="396"/>
        <end position="403"/>
    </location>
</feature>
<feature type="turn" evidence="35">
    <location>
        <begin position="404"/>
        <end position="406"/>
    </location>
</feature>
<feature type="strand" evidence="35">
    <location>
        <begin position="407"/>
        <end position="414"/>
    </location>
</feature>
<evidence type="ECO:0000255" key="1">
    <source>
        <dbReference type="PROSITE-ProRule" id="PRU01348"/>
    </source>
</evidence>
<evidence type="ECO:0000269" key="2">
    <source>
    </source>
</evidence>
<evidence type="ECO:0000269" key="3">
    <source>
    </source>
</evidence>
<evidence type="ECO:0000269" key="4">
    <source>
    </source>
</evidence>
<evidence type="ECO:0000269" key="5">
    <source>
    </source>
</evidence>
<evidence type="ECO:0000269" key="6">
    <source>
    </source>
</evidence>
<evidence type="ECO:0000269" key="7">
    <source>
    </source>
</evidence>
<evidence type="ECO:0000269" key="8">
    <source>
    </source>
</evidence>
<evidence type="ECO:0000269" key="9">
    <source>
    </source>
</evidence>
<evidence type="ECO:0000269" key="10">
    <source>
    </source>
</evidence>
<evidence type="ECO:0000269" key="11">
    <source>
    </source>
</evidence>
<evidence type="ECO:0000269" key="12">
    <source>
    </source>
</evidence>
<evidence type="ECO:0000269" key="13">
    <source>
    </source>
</evidence>
<evidence type="ECO:0000269" key="14">
    <source>
    </source>
</evidence>
<evidence type="ECO:0000303" key="15">
    <source>
    </source>
</evidence>
<evidence type="ECO:0000303" key="16">
    <source>
    </source>
</evidence>
<evidence type="ECO:0000305" key="17"/>
<evidence type="ECO:0000305" key="18">
    <source>
    </source>
</evidence>
<evidence type="ECO:0000305" key="19">
    <source>
    </source>
</evidence>
<evidence type="ECO:0000305" key="20">
    <source>
    </source>
</evidence>
<evidence type="ECO:0000305" key="21">
    <source>
    </source>
</evidence>
<evidence type="ECO:0000305" key="22">
    <source>
    </source>
</evidence>
<evidence type="ECO:0000305" key="23">
    <source>
    </source>
</evidence>
<evidence type="ECO:0007744" key="24">
    <source>
        <dbReference type="PDB" id="2WGD"/>
    </source>
</evidence>
<evidence type="ECO:0007744" key="25">
    <source>
        <dbReference type="PDB" id="2WGE"/>
    </source>
</evidence>
<evidence type="ECO:0007744" key="26">
    <source>
        <dbReference type="PDB" id="2WGF"/>
    </source>
</evidence>
<evidence type="ECO:0007744" key="27">
    <source>
        <dbReference type="PDB" id="2WGG"/>
    </source>
</evidence>
<evidence type="ECO:0007744" key="28">
    <source>
        <dbReference type="PDB" id="5LD8"/>
    </source>
</evidence>
<evidence type="ECO:0007744" key="29">
    <source>
        <dbReference type="PDB" id="6P9K"/>
    </source>
</evidence>
<evidence type="ECO:0007744" key="30">
    <source>
        <dbReference type="PDB" id="6P9L"/>
    </source>
</evidence>
<evidence type="ECO:0007744" key="31">
    <source>
        <dbReference type="PDB" id="6P9M"/>
    </source>
</evidence>
<evidence type="ECO:0007744" key="32">
    <source>
        <dbReference type="PDB" id="6Y2I"/>
    </source>
</evidence>
<evidence type="ECO:0007744" key="33">
    <source>
        <dbReference type="PDB" id="6Y2J"/>
    </source>
</evidence>
<evidence type="ECO:0007829" key="34">
    <source>
        <dbReference type="PDB" id="2WGE"/>
    </source>
</evidence>
<evidence type="ECO:0007829" key="35">
    <source>
        <dbReference type="PDB" id="6P9K"/>
    </source>
</evidence>
<protein>
    <recommendedName>
        <fullName>3-oxoacyl-[acyl-carrier-protein] synthase 1</fullName>
        <ecNumber evidence="18 19 22">2.3.1.293</ecNumber>
    </recommendedName>
    <alternativeName>
        <fullName>Beta-ketoacyl-ACP synthase 1</fullName>
        <shortName>KAS 1</shortName>
    </alternativeName>
    <alternativeName>
        <fullName evidence="16">Beta-ketoacyl-acyl carrier protein synthase KasA</fullName>
    </alternativeName>
    <alternativeName>
        <fullName>Meromycolic acid 3-oxoacyl-(acyl carrier protein) synthase I</fullName>
    </alternativeName>
</protein>
<name>KASA_MYCTU</name>